<comment type="function">
    <text evidence="1 6">Involved in the first step of pre-mRNA splicing. Required for cell growth and cell cycle control. Plays a role in the levels of the U1, U4, U5 and U6 snRNAs and the maintenance of the U4/U6 snRNA complex. May provide the link between the 'nineteen complex' NTC spliceosome protein complex and the spliceosome through the U6 snRNA. Associates predominantly with U6 snRNAs in assembled active spliceosomes. Binds directly to the internal stem-loop (ISL) domain of the U6 snRNA and to the pre-mRNA intron near the 5' splice site during the activation and catalytic phases of the spliceosome cycle (By similarity). Involved in pre-mRNA splicing.</text>
</comment>
<comment type="subunit">
    <text evidence="5">Belongs to the 40S cdc5-associated complex (or cwf complex), a spliceosome sub-complex reminiscent of a late-stage spliceosome composed of the U2, U5 and U6 snRNAs and at least brr2, cdc5, cwf2/prp3, cwf3/syf1, cwf4/syf3, cwf5/ecm2, spp42/cwf6, cwf7/spf27, cwf8, cwf9, cwf10, cwf11, cwf12, prp45/cwf13, cwf14, cwf15, cwf16, cwf17, cwf18, cwf19, cwf20, cwf21, cwf22, cwf23, cwf24, cwf25, cwf26, cyp7/cwf27, cwf28, cwf29/ist3, lea1, msl1, prp5/cwf1, prp10, prp12/sap130, prp17, prp22, sap61, sap62, sap114, sap145, slu7, smb1, smd1, smd3, smf1, smg1 and syf2.</text>
</comment>
<comment type="interaction">
    <interactant intactId="EBI-538799">
        <id>P87126</id>
    </interactant>
    <interactant intactId="EBI-538771">
        <id>P39964</id>
        <label>cdc5</label>
    </interactant>
    <organismsDiffer>false</organismsDiffer>
    <experiments>6</experiments>
</comment>
<comment type="subcellular location">
    <subcellularLocation>
        <location evidence="1">Nucleus</location>
    </subcellularLocation>
</comment>
<comment type="domain">
    <text evidence="1">The C-terminal RRM domain and the zinc finger motif are necessary for RNA-binding.</text>
</comment>
<comment type="similarity">
    <text evidence="7">Belongs to the RRM CWC2 family.</text>
</comment>
<protein>
    <recommendedName>
        <fullName>Pre-mRNA-splicing factor cwf2</fullName>
    </recommendedName>
    <alternativeName>
        <fullName>Complexed with cdc5 protein 2</fullName>
    </alternativeName>
    <alternativeName>
        <fullName>Pre-mRNA-processing protein 3</fullName>
    </alternativeName>
</protein>
<accession>P87126</accession>
<accession>Q9P8I7</accession>
<feature type="chain" id="PRO_0000081549" description="Pre-mRNA-splicing factor cwf2">
    <location>
        <begin position="1"/>
        <end position="388"/>
    </location>
</feature>
<feature type="domain" description="RRM" evidence="2">
    <location>
        <begin position="174"/>
        <end position="248"/>
    </location>
</feature>
<feature type="zinc finger region" description="C3H1-type" evidence="3">
    <location>
        <begin position="111"/>
        <end position="138"/>
    </location>
</feature>
<feature type="region of interest" description="Disordered" evidence="4">
    <location>
        <begin position="43"/>
        <end position="63"/>
    </location>
</feature>
<feature type="region of interest" description="Disordered" evidence="4">
    <location>
        <begin position="331"/>
        <end position="352"/>
    </location>
</feature>
<feature type="strand" evidence="9">
    <location>
        <begin position="70"/>
        <end position="72"/>
    </location>
</feature>
<feature type="turn" evidence="9">
    <location>
        <begin position="73"/>
        <end position="76"/>
    </location>
</feature>
<feature type="strand" evidence="9">
    <location>
        <begin position="77"/>
        <end position="81"/>
    </location>
</feature>
<feature type="turn" evidence="9">
    <location>
        <begin position="86"/>
        <end position="88"/>
    </location>
</feature>
<feature type="helix" evidence="9">
    <location>
        <begin position="99"/>
        <end position="102"/>
    </location>
</feature>
<feature type="helix" evidence="9">
    <location>
        <begin position="107"/>
        <end position="109"/>
    </location>
</feature>
<feature type="helix" evidence="9">
    <location>
        <begin position="118"/>
        <end position="121"/>
    </location>
</feature>
<feature type="helix" evidence="9">
    <location>
        <begin position="128"/>
        <end position="130"/>
    </location>
</feature>
<feature type="strand" evidence="9">
    <location>
        <begin position="132"/>
        <end position="134"/>
    </location>
</feature>
<feature type="strand" evidence="9">
    <location>
        <begin position="146"/>
        <end position="148"/>
    </location>
</feature>
<feature type="strand" evidence="9">
    <location>
        <begin position="152"/>
        <end position="154"/>
    </location>
</feature>
<feature type="strand" evidence="9">
    <location>
        <begin position="156"/>
        <end position="158"/>
    </location>
</feature>
<feature type="strand" evidence="8">
    <location>
        <begin position="175"/>
        <end position="179"/>
    </location>
</feature>
<feature type="helix" evidence="9">
    <location>
        <begin position="187"/>
        <end position="195"/>
    </location>
</feature>
<feature type="turn" evidence="9">
    <location>
        <begin position="196"/>
        <end position="198"/>
    </location>
</feature>
<feature type="strand" evidence="9">
    <location>
        <begin position="201"/>
        <end position="203"/>
    </location>
</feature>
<feature type="turn" evidence="9">
    <location>
        <begin position="208"/>
        <end position="211"/>
    </location>
</feature>
<feature type="strand" evidence="9">
    <location>
        <begin position="216"/>
        <end position="219"/>
    </location>
</feature>
<feature type="helix" evidence="9">
    <location>
        <begin position="220"/>
        <end position="229"/>
    </location>
</feature>
<feature type="strand" evidence="8">
    <location>
        <begin position="242"/>
        <end position="245"/>
    </location>
</feature>
<feature type="helix" evidence="9">
    <location>
        <begin position="252"/>
        <end position="270"/>
    </location>
</feature>
<feature type="turn" evidence="9">
    <location>
        <begin position="271"/>
        <end position="273"/>
    </location>
</feature>
<feature type="helix" evidence="9">
    <location>
        <begin position="276"/>
        <end position="286"/>
    </location>
</feature>
<feature type="helix" evidence="9">
    <location>
        <begin position="291"/>
        <end position="299"/>
    </location>
</feature>
<feature type="helix" evidence="9">
    <location>
        <begin position="310"/>
        <end position="313"/>
    </location>
</feature>
<feature type="helix" evidence="9">
    <location>
        <begin position="321"/>
        <end position="327"/>
    </location>
</feature>
<organism>
    <name type="scientific">Schizosaccharomyces pombe (strain 972 / ATCC 24843)</name>
    <name type="common">Fission yeast</name>
    <dbReference type="NCBI Taxonomy" id="284812"/>
    <lineage>
        <taxon>Eukaryota</taxon>
        <taxon>Fungi</taxon>
        <taxon>Dikarya</taxon>
        <taxon>Ascomycota</taxon>
        <taxon>Taphrinomycotina</taxon>
        <taxon>Schizosaccharomycetes</taxon>
        <taxon>Schizosaccharomycetales</taxon>
        <taxon>Schizosaccharomycetaceae</taxon>
        <taxon>Schizosaccharomyces</taxon>
    </lineage>
</organism>
<sequence length="388" mass="44281">MSENGLEQEVTVEEKNNDVTEKILVEGEKSKEYEETPRKVKIVKRKKQPARKQIETRPEYEMEPEQPGQVYNLWYNKWSGGMRQDPLKSQVKSETRCVISRDSGYTKADKNPGSFFCLYFARGMCSEGSKCEYLHRLPKDTDFFNANVDCFGREKHADYRDDMGGVGSFLRQNYTLYVGGITPTDDIEEIVSRHFAEWGDIERIRVLNSRGIAFITYLNEANAQFAKEAMAHQSLDHDECLNVRWATTDPNPASQARNQRRLEERAANAVKKLLPKQFLLDLEETKNGKSGNRKRKLELEFGLKGYVPSDDLLYADGANSVHNQLAANEFPNKSQSEEGSNDDHKSVTTTESQNKFVNSQILSDLQVAKQAVHTNQSALVSYYDSDED</sequence>
<proteinExistence type="evidence at protein level"/>
<dbReference type="EMBL" id="CU329670">
    <property type="protein sequence ID" value="CAC41387.1"/>
    <property type="molecule type" value="Genomic_DNA"/>
</dbReference>
<dbReference type="EMBL" id="AF250026">
    <property type="protein sequence ID" value="AAF63625.1"/>
    <property type="molecule type" value="Genomic_DNA"/>
</dbReference>
<dbReference type="RefSeq" id="NP_593337.1">
    <property type="nucleotide sequence ID" value="NM_001018769.2"/>
</dbReference>
<dbReference type="PDB" id="3JB9">
    <property type="method" value="EM"/>
    <property type="resolution" value="3.60 A"/>
    <property type="chains" value="Y=1-289"/>
</dbReference>
<dbReference type="PDB" id="9ESH">
    <property type="method" value="EM"/>
    <property type="resolution" value="3.20 A"/>
    <property type="chains" value="P=1-388"/>
</dbReference>
<dbReference type="PDB" id="9ESI">
    <property type="method" value="EM"/>
    <property type="resolution" value="3.10 A"/>
    <property type="chains" value="P=1-388"/>
</dbReference>
<dbReference type="PDBsum" id="3JB9"/>
<dbReference type="PDBsum" id="9ESH"/>
<dbReference type="PDBsum" id="9ESI"/>
<dbReference type="EMDB" id="EMD-19941"/>
<dbReference type="EMDB" id="EMD-19942"/>
<dbReference type="SMR" id="P87126"/>
<dbReference type="BioGRID" id="278989">
    <property type="interactions" value="102"/>
</dbReference>
<dbReference type="DIP" id="DIP-34853N"/>
<dbReference type="FunCoup" id="P87126">
    <property type="interactions" value="76"/>
</dbReference>
<dbReference type="IntAct" id="P87126">
    <property type="interactions" value="35"/>
</dbReference>
<dbReference type="STRING" id="284812.P87126"/>
<dbReference type="iPTMnet" id="P87126"/>
<dbReference type="PaxDb" id="4896-SPAC3A12.11c.1"/>
<dbReference type="EnsemblFungi" id="SPAC3A12.11c.1">
    <property type="protein sequence ID" value="SPAC3A12.11c.1:pep"/>
    <property type="gene ID" value="SPAC3A12.11c"/>
</dbReference>
<dbReference type="GeneID" id="2542531"/>
<dbReference type="KEGG" id="spo:2542531"/>
<dbReference type="PomBase" id="SPAC3A12.11c">
    <property type="gene designation" value="cwf2"/>
</dbReference>
<dbReference type="VEuPathDB" id="FungiDB:SPAC3A12.11c"/>
<dbReference type="eggNOG" id="KOG0118">
    <property type="taxonomic scope" value="Eukaryota"/>
</dbReference>
<dbReference type="HOGENOM" id="CLU_043308_1_0_1"/>
<dbReference type="InParanoid" id="P87126"/>
<dbReference type="OMA" id="CNIAKDS"/>
<dbReference type="PhylomeDB" id="P87126"/>
<dbReference type="PRO" id="PR:P87126"/>
<dbReference type="Proteomes" id="UP000002485">
    <property type="component" value="Chromosome I"/>
</dbReference>
<dbReference type="GO" id="GO:0005634">
    <property type="term" value="C:nucleus"/>
    <property type="evidence" value="ECO:0007005"/>
    <property type="project" value="PomBase"/>
</dbReference>
<dbReference type="GO" id="GO:0071014">
    <property type="term" value="C:post-mRNA release spliceosomal complex"/>
    <property type="evidence" value="ECO:0000314"/>
    <property type="project" value="PomBase"/>
</dbReference>
<dbReference type="GO" id="GO:0000974">
    <property type="term" value="C:Prp19 complex"/>
    <property type="evidence" value="ECO:0000314"/>
    <property type="project" value="PomBase"/>
</dbReference>
<dbReference type="GO" id="GO:0005681">
    <property type="term" value="C:spliceosomal complex"/>
    <property type="evidence" value="ECO:0000314"/>
    <property type="project" value="PomBase"/>
</dbReference>
<dbReference type="GO" id="GO:0071006">
    <property type="term" value="C:U2-type catalytic step 1 spliceosome"/>
    <property type="evidence" value="ECO:0000318"/>
    <property type="project" value="GO_Central"/>
</dbReference>
<dbReference type="GO" id="GO:0071007">
    <property type="term" value="C:U2-type catalytic step 2 spliceosome"/>
    <property type="evidence" value="ECO:0000318"/>
    <property type="project" value="GO_Central"/>
</dbReference>
<dbReference type="GO" id="GO:0036002">
    <property type="term" value="F:pre-mRNA binding"/>
    <property type="evidence" value="ECO:0000250"/>
    <property type="project" value="UniProtKB"/>
</dbReference>
<dbReference type="GO" id="GO:0017070">
    <property type="term" value="F:U6 snRNA binding"/>
    <property type="evidence" value="ECO:0000250"/>
    <property type="project" value="UniProtKB"/>
</dbReference>
<dbReference type="GO" id="GO:0008270">
    <property type="term" value="F:zinc ion binding"/>
    <property type="evidence" value="ECO:0007669"/>
    <property type="project" value="UniProtKB-KW"/>
</dbReference>
<dbReference type="GO" id="GO:0045292">
    <property type="term" value="P:mRNA cis splicing, via spliceosome"/>
    <property type="evidence" value="ECO:0000315"/>
    <property type="project" value="PomBase"/>
</dbReference>
<dbReference type="GO" id="GO:0000387">
    <property type="term" value="P:spliceosomal snRNP assembly"/>
    <property type="evidence" value="ECO:0000250"/>
    <property type="project" value="UniProtKB"/>
</dbReference>
<dbReference type="CDD" id="cd12360">
    <property type="entry name" value="RRM_cwf2"/>
    <property type="match status" value="1"/>
</dbReference>
<dbReference type="FunFam" id="3.30.70.330:FF:000249">
    <property type="entry name" value="Pre-mRNA-splicing factor CWC2, variant"/>
    <property type="match status" value="1"/>
</dbReference>
<dbReference type="Gene3D" id="3.30.70.330">
    <property type="match status" value="1"/>
</dbReference>
<dbReference type="InterPro" id="IPR039171">
    <property type="entry name" value="Cwc2/Slt11"/>
</dbReference>
<dbReference type="InterPro" id="IPR034181">
    <property type="entry name" value="Cwc2_RRM"/>
</dbReference>
<dbReference type="InterPro" id="IPR012677">
    <property type="entry name" value="Nucleotide-bd_a/b_plait_sf"/>
</dbReference>
<dbReference type="InterPro" id="IPR035979">
    <property type="entry name" value="RBD_domain_sf"/>
</dbReference>
<dbReference type="InterPro" id="IPR000504">
    <property type="entry name" value="RRM_dom"/>
</dbReference>
<dbReference type="InterPro" id="IPR032297">
    <property type="entry name" value="Torus"/>
</dbReference>
<dbReference type="InterPro" id="IPR000571">
    <property type="entry name" value="Znf_CCCH"/>
</dbReference>
<dbReference type="InterPro" id="IPR036855">
    <property type="entry name" value="Znf_CCCH_sf"/>
</dbReference>
<dbReference type="PANTHER" id="PTHR14089:SF2">
    <property type="entry name" value="PRE-MRNA-SPLICING FACTOR CWC2"/>
    <property type="match status" value="1"/>
</dbReference>
<dbReference type="PANTHER" id="PTHR14089">
    <property type="entry name" value="PRE-MRNA-SPLICING FACTOR RBM22"/>
    <property type="match status" value="1"/>
</dbReference>
<dbReference type="Pfam" id="PF00076">
    <property type="entry name" value="RRM_1"/>
    <property type="match status" value="1"/>
</dbReference>
<dbReference type="Pfam" id="PF16131">
    <property type="entry name" value="Torus"/>
    <property type="match status" value="1"/>
</dbReference>
<dbReference type="SMART" id="SM00360">
    <property type="entry name" value="RRM"/>
    <property type="match status" value="1"/>
</dbReference>
<dbReference type="SMART" id="SM00356">
    <property type="entry name" value="ZnF_C3H1"/>
    <property type="match status" value="1"/>
</dbReference>
<dbReference type="SUPFAM" id="SSF90229">
    <property type="entry name" value="CCCH zinc finger"/>
    <property type="match status" value="1"/>
</dbReference>
<dbReference type="SUPFAM" id="SSF54928">
    <property type="entry name" value="RNA-binding domain, RBD"/>
    <property type="match status" value="1"/>
</dbReference>
<dbReference type="PROSITE" id="PS50102">
    <property type="entry name" value="RRM"/>
    <property type="match status" value="1"/>
</dbReference>
<dbReference type="PROSITE" id="PS50103">
    <property type="entry name" value="ZF_C3H1"/>
    <property type="match status" value="1"/>
</dbReference>
<keyword id="KW-0002">3D-structure</keyword>
<keyword id="KW-0131">Cell cycle</keyword>
<keyword id="KW-0903">Direct protein sequencing</keyword>
<keyword id="KW-0479">Metal-binding</keyword>
<keyword id="KW-0507">mRNA processing</keyword>
<keyword id="KW-0508">mRNA splicing</keyword>
<keyword id="KW-0539">Nucleus</keyword>
<keyword id="KW-1185">Reference proteome</keyword>
<keyword id="KW-0694">RNA-binding</keyword>
<keyword id="KW-0747">Spliceosome</keyword>
<keyword id="KW-0862">Zinc</keyword>
<keyword id="KW-0863">Zinc-finger</keyword>
<name>CWC2_SCHPO</name>
<reference key="1">
    <citation type="journal article" date="1999" name="Mol. Cell. Biol.">
        <title>Myb-related fission yeast cdc5p is a component of a 40S snRNP-containing complex and is essential for pre-mRNA splicing.</title>
        <authorList>
            <person name="McDonald W.H."/>
            <person name="Ohi R."/>
            <person name="Smelkova N."/>
            <person name="Frendewey D."/>
            <person name="Gould K.L."/>
        </authorList>
    </citation>
    <scope>NUCLEOTIDE SEQUENCE [GENOMIC DNA]</scope>
    <scope>PROTEIN SEQUENCE OF 356-369</scope>
</reference>
<reference key="2">
    <citation type="journal article" date="2002" name="Nature">
        <title>The genome sequence of Schizosaccharomyces pombe.</title>
        <authorList>
            <person name="Wood V."/>
            <person name="Gwilliam R."/>
            <person name="Rajandream M.A."/>
            <person name="Lyne M.H."/>
            <person name="Lyne R."/>
            <person name="Stewart A."/>
            <person name="Sgouros J.G."/>
            <person name="Peat N."/>
            <person name="Hayles J."/>
            <person name="Baker S.G."/>
            <person name="Basham D."/>
            <person name="Bowman S."/>
            <person name="Brooks K."/>
            <person name="Brown D."/>
            <person name="Brown S."/>
            <person name="Chillingworth T."/>
            <person name="Churcher C.M."/>
            <person name="Collins M."/>
            <person name="Connor R."/>
            <person name="Cronin A."/>
            <person name="Davis P."/>
            <person name="Feltwell T."/>
            <person name="Fraser A."/>
            <person name="Gentles S."/>
            <person name="Goble A."/>
            <person name="Hamlin N."/>
            <person name="Harris D.E."/>
            <person name="Hidalgo J."/>
            <person name="Hodgson G."/>
            <person name="Holroyd S."/>
            <person name="Hornsby T."/>
            <person name="Howarth S."/>
            <person name="Huckle E.J."/>
            <person name="Hunt S."/>
            <person name="Jagels K."/>
            <person name="James K.D."/>
            <person name="Jones L."/>
            <person name="Jones M."/>
            <person name="Leather S."/>
            <person name="McDonald S."/>
            <person name="McLean J."/>
            <person name="Mooney P."/>
            <person name="Moule S."/>
            <person name="Mungall K.L."/>
            <person name="Murphy L.D."/>
            <person name="Niblett D."/>
            <person name="Odell C."/>
            <person name="Oliver K."/>
            <person name="O'Neil S."/>
            <person name="Pearson D."/>
            <person name="Quail M.A."/>
            <person name="Rabbinowitsch E."/>
            <person name="Rutherford K.M."/>
            <person name="Rutter S."/>
            <person name="Saunders D."/>
            <person name="Seeger K."/>
            <person name="Sharp S."/>
            <person name="Skelton J."/>
            <person name="Simmonds M.N."/>
            <person name="Squares R."/>
            <person name="Squares S."/>
            <person name="Stevens K."/>
            <person name="Taylor K."/>
            <person name="Taylor R.G."/>
            <person name="Tivey A."/>
            <person name="Walsh S.V."/>
            <person name="Warren T."/>
            <person name="Whitehead S."/>
            <person name="Woodward J.R."/>
            <person name="Volckaert G."/>
            <person name="Aert R."/>
            <person name="Robben J."/>
            <person name="Grymonprez B."/>
            <person name="Weltjens I."/>
            <person name="Vanstreels E."/>
            <person name="Rieger M."/>
            <person name="Schaefer M."/>
            <person name="Mueller-Auer S."/>
            <person name="Gabel C."/>
            <person name="Fuchs M."/>
            <person name="Duesterhoeft A."/>
            <person name="Fritzc C."/>
            <person name="Holzer E."/>
            <person name="Moestl D."/>
            <person name="Hilbert H."/>
            <person name="Borzym K."/>
            <person name="Langer I."/>
            <person name="Beck A."/>
            <person name="Lehrach H."/>
            <person name="Reinhardt R."/>
            <person name="Pohl T.M."/>
            <person name="Eger P."/>
            <person name="Zimmermann W."/>
            <person name="Wedler H."/>
            <person name="Wambutt R."/>
            <person name="Purnelle B."/>
            <person name="Goffeau A."/>
            <person name="Cadieu E."/>
            <person name="Dreano S."/>
            <person name="Gloux S."/>
            <person name="Lelaure V."/>
            <person name="Mottier S."/>
            <person name="Galibert F."/>
            <person name="Aves S.J."/>
            <person name="Xiang Z."/>
            <person name="Hunt C."/>
            <person name="Moore K."/>
            <person name="Hurst S.M."/>
            <person name="Lucas M."/>
            <person name="Rochet M."/>
            <person name="Gaillardin C."/>
            <person name="Tallada V.A."/>
            <person name="Garzon A."/>
            <person name="Thode G."/>
            <person name="Daga R.R."/>
            <person name="Cruzado L."/>
            <person name="Jimenez J."/>
            <person name="Sanchez M."/>
            <person name="del Rey F."/>
            <person name="Benito J."/>
            <person name="Dominguez A."/>
            <person name="Revuelta J.L."/>
            <person name="Moreno S."/>
            <person name="Armstrong J."/>
            <person name="Forsburg S.L."/>
            <person name="Cerutti L."/>
            <person name="Lowe T."/>
            <person name="McCombie W.R."/>
            <person name="Paulsen I."/>
            <person name="Potashkin J."/>
            <person name="Shpakovski G.V."/>
            <person name="Ussery D."/>
            <person name="Barrell B.G."/>
            <person name="Nurse P."/>
        </authorList>
    </citation>
    <scope>NUCLEOTIDE SEQUENCE [LARGE SCALE GENOMIC DNA]</scope>
    <source>
        <strain>972 / ATCC 24843</strain>
    </source>
</reference>
<reference key="3">
    <citation type="journal article" date="1989" name="EMBO J.">
        <title>Pre-mRNA splicing mutants of Schizosaccharomyces pombe.</title>
        <authorList>
            <person name="Potashkin J."/>
            <person name="Li R."/>
            <person name="Frendewey D."/>
        </authorList>
    </citation>
    <scope>FUNCTION</scope>
</reference>
<reference key="4">
    <citation type="journal article" date="2002" name="Mol. Cell. Biol.">
        <title>Proteomics analysis reveals stable multiprotein complexes in both fission and budding yeasts containing Myb-related Cdc5p/Cef1p, novel pre-mRNA splicing factors, and snRNAs.</title>
        <authorList>
            <person name="Ohi M.D."/>
            <person name="Link A.J."/>
            <person name="Ren L."/>
            <person name="Jennings J.L."/>
            <person name="McDonald W.H."/>
            <person name="Gould K.L."/>
        </authorList>
    </citation>
    <scope>IDENTIFICATION IN THE CWF COMPLEX</scope>
    <scope>IDENTIFICATION BY MASS SPECTROMETRY</scope>
</reference>
<evidence type="ECO:0000250" key="1"/>
<evidence type="ECO:0000255" key="2">
    <source>
        <dbReference type="PROSITE-ProRule" id="PRU00176"/>
    </source>
</evidence>
<evidence type="ECO:0000255" key="3">
    <source>
        <dbReference type="PROSITE-ProRule" id="PRU00723"/>
    </source>
</evidence>
<evidence type="ECO:0000256" key="4">
    <source>
        <dbReference type="SAM" id="MobiDB-lite"/>
    </source>
</evidence>
<evidence type="ECO:0000269" key="5">
    <source>
    </source>
</evidence>
<evidence type="ECO:0000269" key="6">
    <source>
    </source>
</evidence>
<evidence type="ECO:0000305" key="7"/>
<evidence type="ECO:0007829" key="8">
    <source>
        <dbReference type="PDB" id="9ESH"/>
    </source>
</evidence>
<evidence type="ECO:0007829" key="9">
    <source>
        <dbReference type="PDB" id="9ESI"/>
    </source>
</evidence>
<gene>
    <name type="primary">cwf2</name>
    <name type="synonym">prp3</name>
    <name type="ORF">SPAC3A12.11c</name>
</gene>